<protein>
    <recommendedName>
        <fullName>Sodium/potassium-transporting ATPase subunit beta-1-interacting protein</fullName>
        <shortName>Na(+)/K(+)-transporting ATPase subunit beta-1-interacting protein</shortName>
        <shortName>dNKAIN</shortName>
    </recommendedName>
</protein>
<evidence type="ECO:0000255" key="1"/>
<evidence type="ECO:0000256" key="2">
    <source>
        <dbReference type="SAM" id="MobiDB-lite"/>
    </source>
</evidence>
<evidence type="ECO:0000269" key="3">
    <source>
    </source>
</evidence>
<evidence type="ECO:0000269" key="4">
    <source>
    </source>
</evidence>
<evidence type="ECO:0000303" key="5">
    <source>
    </source>
</evidence>
<evidence type="ECO:0000305" key="6"/>
<keyword id="KW-0025">Alternative splicing</keyword>
<keyword id="KW-1003">Cell membrane</keyword>
<keyword id="KW-0325">Glycoprotein</keyword>
<keyword id="KW-0472">Membrane</keyword>
<keyword id="KW-0597">Phosphoprotein</keyword>
<keyword id="KW-1185">Reference proteome</keyword>
<keyword id="KW-0812">Transmembrane</keyword>
<keyword id="KW-1133">Transmembrane helix</keyword>
<organism>
    <name type="scientific">Drosophila melanogaster</name>
    <name type="common">Fruit fly</name>
    <dbReference type="NCBI Taxonomy" id="7227"/>
    <lineage>
        <taxon>Eukaryota</taxon>
        <taxon>Metazoa</taxon>
        <taxon>Ecdysozoa</taxon>
        <taxon>Arthropoda</taxon>
        <taxon>Hexapoda</taxon>
        <taxon>Insecta</taxon>
        <taxon>Pterygota</taxon>
        <taxon>Neoptera</taxon>
        <taxon>Endopterygota</taxon>
        <taxon>Diptera</taxon>
        <taxon>Brachycera</taxon>
        <taxon>Muscomorpha</taxon>
        <taxon>Ephydroidea</taxon>
        <taxon>Drosophilidae</taxon>
        <taxon>Drosophila</taxon>
        <taxon>Sophophora</taxon>
    </lineage>
</organism>
<dbReference type="EMBL" id="EF058058">
    <property type="protein sequence ID" value="ABN51176.1"/>
    <property type="molecule type" value="mRNA"/>
</dbReference>
<dbReference type="EMBL" id="AE013599">
    <property type="protein sequence ID" value="AAF47286.4"/>
    <property type="molecule type" value="Genomic_DNA"/>
</dbReference>
<dbReference type="EMBL" id="AE013599">
    <property type="protein sequence ID" value="AAM70797.3"/>
    <property type="molecule type" value="Genomic_DNA"/>
</dbReference>
<dbReference type="EMBL" id="AE013599">
    <property type="protein sequence ID" value="AAN16122.2"/>
    <property type="molecule type" value="Genomic_DNA"/>
</dbReference>
<dbReference type="EMBL" id="AY051438">
    <property type="protein sequence ID" value="AAK92862.1"/>
    <property type="molecule type" value="mRNA"/>
</dbReference>
<dbReference type="RefSeq" id="NP_001246506.1">
    <molecule id="A6MHQ4-1"/>
    <property type="nucleotide sequence ID" value="NM_001259577.2"/>
</dbReference>
<dbReference type="RefSeq" id="NP_611975.3">
    <molecule id="A6MHQ4-1"/>
    <property type="nucleotide sequence ID" value="NM_138131.4"/>
</dbReference>
<dbReference type="RefSeq" id="NP_726492.2">
    <molecule id="A6MHQ4-1"/>
    <property type="nucleotide sequence ID" value="NM_166693.3"/>
</dbReference>
<dbReference type="RefSeq" id="NP_726493.2">
    <molecule id="A6MHQ4-1"/>
    <property type="nucleotide sequence ID" value="NM_166694.3"/>
</dbReference>
<dbReference type="BioGRID" id="63547">
    <property type="interactions" value="3"/>
</dbReference>
<dbReference type="FunCoup" id="A6MHQ4">
    <property type="interactions" value="1"/>
</dbReference>
<dbReference type="STRING" id="7227.FBpp0293593"/>
<dbReference type="TCDB" id="8.A.118.1.1">
    <property type="family name" value="the na+k+-atpase beta-subunit interacting nkain (nkain) family"/>
</dbReference>
<dbReference type="GlyCosmos" id="A6MHQ4">
    <property type="glycosylation" value="8 sites, No reported glycans"/>
</dbReference>
<dbReference type="GlyGen" id="A6MHQ4">
    <property type="glycosylation" value="8 sites"/>
</dbReference>
<dbReference type="iPTMnet" id="A6MHQ4"/>
<dbReference type="PaxDb" id="7227-FBpp0291061"/>
<dbReference type="DNASU" id="37979"/>
<dbReference type="EnsemblMetazoa" id="FBtr0301847">
    <molecule id="A6MHQ4-1"/>
    <property type="protein sequence ID" value="FBpp0291061"/>
    <property type="gene ID" value="FBgn0085442"/>
</dbReference>
<dbReference type="EnsemblMetazoa" id="FBtr0301848">
    <molecule id="A6MHQ4-1"/>
    <property type="protein sequence ID" value="FBpp0291062"/>
    <property type="gene ID" value="FBgn0085442"/>
</dbReference>
<dbReference type="EnsemblMetazoa" id="FBtr0301849">
    <molecule id="A6MHQ4-1"/>
    <property type="protein sequence ID" value="FBpp0291063"/>
    <property type="gene ID" value="FBgn0085442"/>
</dbReference>
<dbReference type="EnsemblMetazoa" id="FBtr0305056">
    <molecule id="A6MHQ4-1"/>
    <property type="protein sequence ID" value="FBpp0293593"/>
    <property type="gene ID" value="FBgn0085442"/>
</dbReference>
<dbReference type="GeneID" id="37979"/>
<dbReference type="KEGG" id="dme:Dmel_CG34413"/>
<dbReference type="AGR" id="FB:FBgn0085442"/>
<dbReference type="CTD" id="37979"/>
<dbReference type="FlyBase" id="FBgn0085442">
    <property type="gene designation" value="NKAIN"/>
</dbReference>
<dbReference type="VEuPathDB" id="VectorBase:FBgn0085442"/>
<dbReference type="eggNOG" id="KOG4556">
    <property type="taxonomic scope" value="Eukaryota"/>
</dbReference>
<dbReference type="HOGENOM" id="CLU_027600_0_0_1"/>
<dbReference type="InParanoid" id="A6MHQ4"/>
<dbReference type="OrthoDB" id="10050321at2759"/>
<dbReference type="PhylomeDB" id="A6MHQ4"/>
<dbReference type="BioGRID-ORCS" id="37979">
    <property type="hits" value="0 hits in 3 CRISPR screens"/>
</dbReference>
<dbReference type="GenomeRNAi" id="37979"/>
<dbReference type="PRO" id="PR:A6MHQ4"/>
<dbReference type="Proteomes" id="UP000000803">
    <property type="component" value="Chromosome 2R"/>
</dbReference>
<dbReference type="Bgee" id="FBgn0085442">
    <property type="expression patterns" value="Expressed in adult differentiating enterocyte in digestive tract and 256 other cell types or tissues"/>
</dbReference>
<dbReference type="ExpressionAtlas" id="A6MHQ4">
    <property type="expression patterns" value="baseline and differential"/>
</dbReference>
<dbReference type="GO" id="GO:0005886">
    <property type="term" value="C:plasma membrane"/>
    <property type="evidence" value="ECO:0007669"/>
    <property type="project" value="UniProtKB-SubCell"/>
</dbReference>
<dbReference type="GO" id="GO:0002028">
    <property type="term" value="P:regulation of sodium ion transport"/>
    <property type="evidence" value="ECO:0000315"/>
    <property type="project" value="UniProtKB"/>
</dbReference>
<dbReference type="InterPro" id="IPR008516">
    <property type="entry name" value="Na/K-Atpase_Interacting"/>
</dbReference>
<dbReference type="PANTHER" id="PTHR13084:SF6">
    <property type="entry name" value="SODIUM_POTASSIUM-TRANSPORTING ATPASE SUBUNIT BETA-1-INTERACTING PROTEIN"/>
    <property type="match status" value="1"/>
</dbReference>
<dbReference type="PANTHER" id="PTHR13084">
    <property type="entry name" value="T-CELL LYMPHOMA BREAKPOINT-ASSOCIATED TARGET 1-RELATED"/>
    <property type="match status" value="1"/>
</dbReference>
<dbReference type="Pfam" id="PF05640">
    <property type="entry name" value="NKAIN"/>
    <property type="match status" value="1"/>
</dbReference>
<reference key="1">
    <citation type="journal article" date="2007" name="Hum. Mol. Genet.">
        <title>A novel family of transmembrane proteins interacting with beta subunits of the Na,K-ATPase.</title>
        <authorList>
            <person name="Gorokhova S."/>
            <person name="Bibert S."/>
            <person name="Geering K."/>
            <person name="Heintz N."/>
        </authorList>
    </citation>
    <scope>NUCLEOTIDE SEQUENCE [MRNA] (ISOFORM 1)</scope>
    <scope>FUNCTION</scope>
    <scope>INTERACTION WITH NRV1</scope>
    <scope>TISSUE SPECIFICITY</scope>
    <scope>DISRUPTION PHENOTYPE</scope>
</reference>
<reference key="2">
    <citation type="journal article" date="2000" name="Science">
        <title>The genome sequence of Drosophila melanogaster.</title>
        <authorList>
            <person name="Adams M.D."/>
            <person name="Celniker S.E."/>
            <person name="Holt R.A."/>
            <person name="Evans C.A."/>
            <person name="Gocayne J.D."/>
            <person name="Amanatides P.G."/>
            <person name="Scherer S.E."/>
            <person name="Li P.W."/>
            <person name="Hoskins R.A."/>
            <person name="Galle R.F."/>
            <person name="George R.A."/>
            <person name="Lewis S.E."/>
            <person name="Richards S."/>
            <person name="Ashburner M."/>
            <person name="Henderson S.N."/>
            <person name="Sutton G.G."/>
            <person name="Wortman J.R."/>
            <person name="Yandell M.D."/>
            <person name="Zhang Q."/>
            <person name="Chen L.X."/>
            <person name="Brandon R.C."/>
            <person name="Rogers Y.-H.C."/>
            <person name="Blazej R.G."/>
            <person name="Champe M."/>
            <person name="Pfeiffer B.D."/>
            <person name="Wan K.H."/>
            <person name="Doyle C."/>
            <person name="Baxter E.G."/>
            <person name="Helt G."/>
            <person name="Nelson C.R."/>
            <person name="Miklos G.L.G."/>
            <person name="Abril J.F."/>
            <person name="Agbayani A."/>
            <person name="An H.-J."/>
            <person name="Andrews-Pfannkoch C."/>
            <person name="Baldwin D."/>
            <person name="Ballew R.M."/>
            <person name="Basu A."/>
            <person name="Baxendale J."/>
            <person name="Bayraktaroglu L."/>
            <person name="Beasley E.M."/>
            <person name="Beeson K.Y."/>
            <person name="Benos P.V."/>
            <person name="Berman B.P."/>
            <person name="Bhandari D."/>
            <person name="Bolshakov S."/>
            <person name="Borkova D."/>
            <person name="Botchan M.R."/>
            <person name="Bouck J."/>
            <person name="Brokstein P."/>
            <person name="Brottier P."/>
            <person name="Burtis K.C."/>
            <person name="Busam D.A."/>
            <person name="Butler H."/>
            <person name="Cadieu E."/>
            <person name="Center A."/>
            <person name="Chandra I."/>
            <person name="Cherry J.M."/>
            <person name="Cawley S."/>
            <person name="Dahlke C."/>
            <person name="Davenport L.B."/>
            <person name="Davies P."/>
            <person name="de Pablos B."/>
            <person name="Delcher A."/>
            <person name="Deng Z."/>
            <person name="Mays A.D."/>
            <person name="Dew I."/>
            <person name="Dietz S.M."/>
            <person name="Dodson K."/>
            <person name="Doup L.E."/>
            <person name="Downes M."/>
            <person name="Dugan-Rocha S."/>
            <person name="Dunkov B.C."/>
            <person name="Dunn P."/>
            <person name="Durbin K.J."/>
            <person name="Evangelista C.C."/>
            <person name="Ferraz C."/>
            <person name="Ferriera S."/>
            <person name="Fleischmann W."/>
            <person name="Fosler C."/>
            <person name="Gabrielian A.E."/>
            <person name="Garg N.S."/>
            <person name="Gelbart W.M."/>
            <person name="Glasser K."/>
            <person name="Glodek A."/>
            <person name="Gong F."/>
            <person name="Gorrell J.H."/>
            <person name="Gu Z."/>
            <person name="Guan P."/>
            <person name="Harris M."/>
            <person name="Harris N.L."/>
            <person name="Harvey D.A."/>
            <person name="Heiman T.J."/>
            <person name="Hernandez J.R."/>
            <person name="Houck J."/>
            <person name="Hostin D."/>
            <person name="Houston K.A."/>
            <person name="Howland T.J."/>
            <person name="Wei M.-H."/>
            <person name="Ibegwam C."/>
            <person name="Jalali M."/>
            <person name="Kalush F."/>
            <person name="Karpen G.H."/>
            <person name="Ke Z."/>
            <person name="Kennison J.A."/>
            <person name="Ketchum K.A."/>
            <person name="Kimmel B.E."/>
            <person name="Kodira C.D."/>
            <person name="Kraft C.L."/>
            <person name="Kravitz S."/>
            <person name="Kulp D."/>
            <person name="Lai Z."/>
            <person name="Lasko P."/>
            <person name="Lei Y."/>
            <person name="Levitsky A.A."/>
            <person name="Li J.H."/>
            <person name="Li Z."/>
            <person name="Liang Y."/>
            <person name="Lin X."/>
            <person name="Liu X."/>
            <person name="Mattei B."/>
            <person name="McIntosh T.C."/>
            <person name="McLeod M.P."/>
            <person name="McPherson D."/>
            <person name="Merkulov G."/>
            <person name="Milshina N.V."/>
            <person name="Mobarry C."/>
            <person name="Morris J."/>
            <person name="Moshrefi A."/>
            <person name="Mount S.M."/>
            <person name="Moy M."/>
            <person name="Murphy B."/>
            <person name="Murphy L."/>
            <person name="Muzny D.M."/>
            <person name="Nelson D.L."/>
            <person name="Nelson D.R."/>
            <person name="Nelson K.A."/>
            <person name="Nixon K."/>
            <person name="Nusskern D.R."/>
            <person name="Pacleb J.M."/>
            <person name="Palazzolo M."/>
            <person name="Pittman G.S."/>
            <person name="Pan S."/>
            <person name="Pollard J."/>
            <person name="Puri V."/>
            <person name="Reese M.G."/>
            <person name="Reinert K."/>
            <person name="Remington K."/>
            <person name="Saunders R.D.C."/>
            <person name="Scheeler F."/>
            <person name="Shen H."/>
            <person name="Shue B.C."/>
            <person name="Siden-Kiamos I."/>
            <person name="Simpson M."/>
            <person name="Skupski M.P."/>
            <person name="Smith T.J."/>
            <person name="Spier E."/>
            <person name="Spradling A.C."/>
            <person name="Stapleton M."/>
            <person name="Strong R."/>
            <person name="Sun E."/>
            <person name="Svirskas R."/>
            <person name="Tector C."/>
            <person name="Turner R."/>
            <person name="Venter E."/>
            <person name="Wang A.H."/>
            <person name="Wang X."/>
            <person name="Wang Z.-Y."/>
            <person name="Wassarman D.A."/>
            <person name="Weinstock G.M."/>
            <person name="Weissenbach J."/>
            <person name="Williams S.M."/>
            <person name="Woodage T."/>
            <person name="Worley K.C."/>
            <person name="Wu D."/>
            <person name="Yang S."/>
            <person name="Yao Q.A."/>
            <person name="Ye J."/>
            <person name="Yeh R.-F."/>
            <person name="Zaveri J.S."/>
            <person name="Zhan M."/>
            <person name="Zhang G."/>
            <person name="Zhao Q."/>
            <person name="Zheng L."/>
            <person name="Zheng X.H."/>
            <person name="Zhong F.N."/>
            <person name="Zhong W."/>
            <person name="Zhou X."/>
            <person name="Zhu S.C."/>
            <person name="Zhu X."/>
            <person name="Smith H.O."/>
            <person name="Gibbs R.A."/>
            <person name="Myers E.W."/>
            <person name="Rubin G.M."/>
            <person name="Venter J.C."/>
        </authorList>
    </citation>
    <scope>NUCLEOTIDE SEQUENCE [LARGE SCALE GENOMIC DNA]</scope>
    <source>
        <strain>Berkeley</strain>
    </source>
</reference>
<reference key="3">
    <citation type="journal article" date="2002" name="Genome Biol.">
        <title>Annotation of the Drosophila melanogaster euchromatic genome: a systematic review.</title>
        <authorList>
            <person name="Misra S."/>
            <person name="Crosby M.A."/>
            <person name="Mungall C.J."/>
            <person name="Matthews B.B."/>
            <person name="Campbell K.S."/>
            <person name="Hradecky P."/>
            <person name="Huang Y."/>
            <person name="Kaminker J.S."/>
            <person name="Millburn G.H."/>
            <person name="Prochnik S.E."/>
            <person name="Smith C.D."/>
            <person name="Tupy J.L."/>
            <person name="Whitfield E.J."/>
            <person name="Bayraktaroglu L."/>
            <person name="Berman B.P."/>
            <person name="Bettencourt B.R."/>
            <person name="Celniker S.E."/>
            <person name="de Grey A.D.N.J."/>
            <person name="Drysdale R.A."/>
            <person name="Harris N.L."/>
            <person name="Richter J."/>
            <person name="Russo S."/>
            <person name="Schroeder A.J."/>
            <person name="Shu S.Q."/>
            <person name="Stapleton M."/>
            <person name="Yamada C."/>
            <person name="Ashburner M."/>
            <person name="Gelbart W.M."/>
            <person name="Rubin G.M."/>
            <person name="Lewis S.E."/>
        </authorList>
    </citation>
    <scope>GENOME REANNOTATION</scope>
    <source>
        <strain>Berkeley</strain>
    </source>
</reference>
<reference key="4">
    <citation type="journal article" date="2002" name="Genome Biol.">
        <title>A Drosophila full-length cDNA resource.</title>
        <authorList>
            <person name="Stapleton M."/>
            <person name="Carlson J.W."/>
            <person name="Brokstein P."/>
            <person name="Yu C."/>
            <person name="Champe M."/>
            <person name="George R.A."/>
            <person name="Guarin H."/>
            <person name="Kronmiller B."/>
            <person name="Pacleb J.M."/>
            <person name="Park S."/>
            <person name="Wan K.H."/>
            <person name="Rubin G.M."/>
            <person name="Celniker S.E."/>
        </authorList>
    </citation>
    <scope>NUCLEOTIDE SEQUENCE [LARGE SCALE MRNA] (ISOFORM 2)</scope>
    <source>
        <strain>Berkeley</strain>
        <tissue>Head</tissue>
    </source>
</reference>
<reference key="5">
    <citation type="journal article" date="2008" name="J. Proteome Res.">
        <title>Phosphoproteome analysis of Drosophila melanogaster embryos.</title>
        <authorList>
            <person name="Zhai B."/>
            <person name="Villen J."/>
            <person name="Beausoleil S.A."/>
            <person name="Mintseris J."/>
            <person name="Gygi S.P."/>
        </authorList>
    </citation>
    <scope>PHOSPHORYLATION [LARGE SCALE ANALYSIS] AT SER-291; SER-308; SER-398 AND SER-399</scope>
    <scope>IDENTIFICATION BY MASS SPECTROMETRY</scope>
    <source>
        <tissue>Embryo</tissue>
    </source>
</reference>
<name>NKAIN_DROME</name>
<comment type="function">
    <text evidence="3">Induces a small but significant sodium conductance when expressed in Xenopus oocytes.</text>
</comment>
<comment type="subunit">
    <text evidence="3">Interacts with nrv1.</text>
</comment>
<comment type="subcellular location">
    <subcellularLocation>
        <location evidence="6">Cell membrane</location>
        <topology evidence="6">Multi-pass membrane protein</topology>
    </subcellularLocation>
</comment>
<comment type="alternative products">
    <event type="alternative splicing"/>
    <isoform>
        <id>A6MHQ4-1</id>
        <name>1</name>
        <name>F</name>
        <name>G</name>
        <name>H</name>
        <sequence type="displayed"/>
    </isoform>
    <isoform>
        <id>A6MHQ4-2</id>
        <name>2</name>
        <sequence type="described" ref="VSP_029303 VSP_029304"/>
    </isoform>
</comment>
<comment type="tissue specificity">
    <text evidence="3">Expressed in the brain.</text>
</comment>
<comment type="disruption phenotype">
    <text evidence="3">Flies are not viable. However, the decreased expression due to gene disruption leads to a temperature-sensitive phenotype with paralysis at 38 degrees Celsius.</text>
</comment>
<comment type="similarity">
    <text evidence="6">Belongs to the NKAIN family.</text>
</comment>
<proteinExistence type="evidence at protein level"/>
<feature type="chain" id="PRO_0000310473" description="Sodium/potassium-transporting ATPase subunit beta-1-interacting protein">
    <location>
        <begin position="1"/>
        <end position="658"/>
    </location>
</feature>
<feature type="transmembrane region" description="Helical" evidence="1">
    <location>
        <begin position="1"/>
        <end position="22"/>
    </location>
</feature>
<feature type="transmembrane region" description="Helical" evidence="1">
    <location>
        <begin position="31"/>
        <end position="51"/>
    </location>
</feature>
<feature type="transmembrane region" description="Helical" evidence="1">
    <location>
        <begin position="64"/>
        <end position="84"/>
    </location>
</feature>
<feature type="transmembrane region" description="Helical" evidence="1">
    <location>
        <begin position="152"/>
        <end position="172"/>
    </location>
</feature>
<feature type="region of interest" description="Disordered" evidence="2">
    <location>
        <begin position="222"/>
        <end position="241"/>
    </location>
</feature>
<feature type="region of interest" description="Disordered" evidence="2">
    <location>
        <begin position="248"/>
        <end position="337"/>
    </location>
</feature>
<feature type="region of interest" description="Disordered" evidence="2">
    <location>
        <begin position="571"/>
        <end position="601"/>
    </location>
</feature>
<feature type="region of interest" description="Disordered" evidence="2">
    <location>
        <begin position="621"/>
        <end position="658"/>
    </location>
</feature>
<feature type="compositionally biased region" description="Polar residues" evidence="2">
    <location>
        <begin position="274"/>
        <end position="308"/>
    </location>
</feature>
<feature type="compositionally biased region" description="Basic residues" evidence="2">
    <location>
        <begin position="309"/>
        <end position="318"/>
    </location>
</feature>
<feature type="compositionally biased region" description="Low complexity" evidence="2">
    <location>
        <begin position="322"/>
        <end position="335"/>
    </location>
</feature>
<feature type="modified residue" description="Phosphoserine" evidence="4">
    <location>
        <position position="291"/>
    </location>
</feature>
<feature type="modified residue" description="Phosphoserine" evidence="4">
    <location>
        <position position="308"/>
    </location>
</feature>
<feature type="modified residue" description="Phosphoserine" evidence="4">
    <location>
        <position position="398"/>
    </location>
</feature>
<feature type="modified residue" description="Phosphoserine" evidence="4">
    <location>
        <position position="399"/>
    </location>
</feature>
<feature type="glycosylation site" description="N-linked (GlcNAc...) asparagine" evidence="1">
    <location>
        <position position="257"/>
    </location>
</feature>
<feature type="glycosylation site" description="N-linked (GlcNAc...) asparagine" evidence="1">
    <location>
        <position position="275"/>
    </location>
</feature>
<feature type="glycosylation site" description="N-linked (GlcNAc...) asparagine" evidence="1">
    <location>
        <position position="279"/>
    </location>
</feature>
<feature type="glycosylation site" description="N-linked (GlcNAc...) asparagine" evidence="1">
    <location>
        <position position="305"/>
    </location>
</feature>
<feature type="glycosylation site" description="N-linked (GlcNAc...) asparagine" evidence="1">
    <location>
        <position position="355"/>
    </location>
</feature>
<feature type="glycosylation site" description="N-linked (GlcNAc...) asparagine" evidence="1">
    <location>
        <position position="396"/>
    </location>
</feature>
<feature type="glycosylation site" description="N-linked (GlcNAc...) asparagine" evidence="1">
    <location>
        <position position="417"/>
    </location>
</feature>
<feature type="glycosylation site" description="N-linked (GlcNAc...) asparagine" evidence="1">
    <location>
        <position position="449"/>
    </location>
</feature>
<feature type="splice variant" id="VSP_029303" description="In isoform 2." evidence="5">
    <original>GGNISSPVRPLDRLSRSLEDDEDNFSLQKFAPGEHGVTYVPFQSPTPNSLFLGENNNSQ</original>
    <variation>AALAPLLSLTHAFCLGRMAVTNSTRITRSLNTYKKFHIHRCCCFFVVPNQPANLAKNRS</variation>
    <location>
        <begin position="394"/>
        <end position="452"/>
    </location>
</feature>
<feature type="splice variant" id="VSP_029304" description="In isoform 2." evidence="5">
    <location>
        <begin position="453"/>
        <end position="658"/>
    </location>
</feature>
<accession>A6MHQ4</accession>
<accession>Q8MMC8</accession>
<accession>Q961Q4</accession>
<gene>
    <name type="primary">NKAIN</name>
    <name type="ORF">CG34413</name>
</gene>
<sequence length="658" mass="73671">MGSCSCTRRHFLLSICFLQVITIIERQVFDFLGYMWAPILVNFFHILFIIFGFYGAYHFRVKYIITYLIWNFLWIGWNTFLICFYLNVGQLNRDSDLLNLGTGSVSWFEANGYGCKPTYNMAADDTFRPQRPERVEGCLLDYPLVEITHSGVQCALALLGILGAILISCIFLDEDDRFDFMNGDAKSPQHTVVHPMYVSYTSIPTTSASATMQSNKHLQLQHQQPQQNSLKLYHHQQQQQPKLHHFNKNYQLSGSNNNTLNNNLHQRAPALLPPNTTNNRSASFQTQSHPSNNHVTQRTGGEGSNCSSLRRHRQHHSKALVSPSPMSPQTTPSLSYASLQNSSPYLAGNSLSNSNYSIFQSPDSLQGSSHFARIHHKPKPPKSDYPVSGEFNPGGNISSPVRPLDRLSRSLEDDEDNFSLQKFAPGEHGVTYVPFQSPTPNSLFLGENNNSQPHLVFHTNSRSSPNNNAYPYDQSGLPSSLRMGSNSNARRPTHIPLPTVPMHNCQEVENDEDADGESEQDHDQMLTPPPPPLVRPHIHQRLGQAPYLDLSPEVAERYAIPSKLGPSLPIQVPLPVPHGSPMVRRSNRRPRPSNPVNFCDQIRATPPGYVVRAQSDDRLMEQVEADAAPHVNRRSGRGGSGQKTRPRSFCNSIVGVQG</sequence>